<organism>
    <name type="scientific">Nostoc punctiforme (strain ATCC 29133 / PCC 73102)</name>
    <dbReference type="NCBI Taxonomy" id="63737"/>
    <lineage>
        <taxon>Bacteria</taxon>
        <taxon>Bacillati</taxon>
        <taxon>Cyanobacteriota</taxon>
        <taxon>Cyanophyceae</taxon>
        <taxon>Nostocales</taxon>
        <taxon>Nostocaceae</taxon>
        <taxon>Nostoc</taxon>
    </lineage>
</organism>
<reference key="1">
    <citation type="submission" date="2001-05" db="EMBL/GenBank/DDBJ databases">
        <authorList>
            <person name="Predki P.F."/>
        </authorList>
    </citation>
    <scope>NUCLEOTIDE SEQUENCE [GENOMIC DNA]</scope>
</reference>
<reference key="2">
    <citation type="journal article" date="2013" name="Plant Physiol.">
        <title>A Nostoc punctiforme Sugar Transporter Necessary to Establish a Cyanobacterium-Plant Symbiosis.</title>
        <authorList>
            <person name="Ekman M."/>
            <person name="Picossi S."/>
            <person name="Campbell E.L."/>
            <person name="Meeks J.C."/>
            <person name="Flores E."/>
        </authorList>
    </citation>
    <scope>NUCLEOTIDE SEQUENCE [LARGE SCALE GENOMIC DNA]</scope>
    <source>
        <strain>ATCC 29133 / PCC 73102</strain>
    </source>
</reference>
<evidence type="ECO:0000255" key="1">
    <source>
        <dbReference type="HAMAP-Rule" id="MF_00003"/>
    </source>
</evidence>
<evidence type="ECO:0000256" key="2">
    <source>
        <dbReference type="SAM" id="MobiDB-lite"/>
    </source>
</evidence>
<proteinExistence type="inferred from homology"/>
<accession>Q93LL7</accession>
<accession>B2J9F6</accession>
<name>RBFA_NOSP7</name>
<feature type="chain" id="PRO_0000102704" description="Ribosome-binding factor A">
    <location>
        <begin position="1"/>
        <end position="139"/>
    </location>
</feature>
<feature type="region of interest" description="Disordered" evidence="2">
    <location>
        <begin position="120"/>
        <end position="139"/>
    </location>
</feature>
<feature type="compositionally biased region" description="Acidic residues" evidence="2">
    <location>
        <begin position="128"/>
        <end position="139"/>
    </location>
</feature>
<keyword id="KW-0963">Cytoplasm</keyword>
<keyword id="KW-1185">Reference proteome</keyword>
<keyword id="KW-0690">Ribosome biogenesis</keyword>
<dbReference type="EMBL" id="AY037296">
    <property type="protein sequence ID" value="AAK68649.1"/>
    <property type="molecule type" value="Genomic_DNA"/>
</dbReference>
<dbReference type="EMBL" id="CP001037">
    <property type="protein sequence ID" value="ACC79455.1"/>
    <property type="molecule type" value="Genomic_DNA"/>
</dbReference>
<dbReference type="RefSeq" id="WP_012407480.1">
    <property type="nucleotide sequence ID" value="NC_010628.1"/>
</dbReference>
<dbReference type="SMR" id="Q93LL7"/>
<dbReference type="STRING" id="63737.Npun_F0703"/>
<dbReference type="EnsemblBacteria" id="ACC79455">
    <property type="protein sequence ID" value="ACC79455"/>
    <property type="gene ID" value="Npun_F0703"/>
</dbReference>
<dbReference type="KEGG" id="npu:Npun_F0703"/>
<dbReference type="eggNOG" id="COG0858">
    <property type="taxonomic scope" value="Bacteria"/>
</dbReference>
<dbReference type="HOGENOM" id="CLU_089475_2_1_3"/>
<dbReference type="OrthoDB" id="307788at2"/>
<dbReference type="PhylomeDB" id="Q93LL7"/>
<dbReference type="Proteomes" id="UP000001191">
    <property type="component" value="Chromosome"/>
</dbReference>
<dbReference type="GO" id="GO:0005829">
    <property type="term" value="C:cytosol"/>
    <property type="evidence" value="ECO:0007669"/>
    <property type="project" value="TreeGrafter"/>
</dbReference>
<dbReference type="GO" id="GO:0043024">
    <property type="term" value="F:ribosomal small subunit binding"/>
    <property type="evidence" value="ECO:0007669"/>
    <property type="project" value="TreeGrafter"/>
</dbReference>
<dbReference type="GO" id="GO:0030490">
    <property type="term" value="P:maturation of SSU-rRNA"/>
    <property type="evidence" value="ECO:0007669"/>
    <property type="project" value="UniProtKB-UniRule"/>
</dbReference>
<dbReference type="Gene3D" id="3.30.300.20">
    <property type="match status" value="1"/>
</dbReference>
<dbReference type="HAMAP" id="MF_00003">
    <property type="entry name" value="RbfA"/>
    <property type="match status" value="1"/>
</dbReference>
<dbReference type="InterPro" id="IPR015946">
    <property type="entry name" value="KH_dom-like_a/b"/>
</dbReference>
<dbReference type="InterPro" id="IPR000238">
    <property type="entry name" value="RbfA"/>
</dbReference>
<dbReference type="InterPro" id="IPR023799">
    <property type="entry name" value="RbfA_dom_sf"/>
</dbReference>
<dbReference type="InterPro" id="IPR020053">
    <property type="entry name" value="Ribosome-bd_factorA_CS"/>
</dbReference>
<dbReference type="NCBIfam" id="TIGR00082">
    <property type="entry name" value="rbfA"/>
    <property type="match status" value="1"/>
</dbReference>
<dbReference type="PANTHER" id="PTHR33515">
    <property type="entry name" value="RIBOSOME-BINDING FACTOR A, CHLOROPLASTIC-RELATED"/>
    <property type="match status" value="1"/>
</dbReference>
<dbReference type="PANTHER" id="PTHR33515:SF1">
    <property type="entry name" value="RIBOSOME-BINDING FACTOR A, CHLOROPLASTIC-RELATED"/>
    <property type="match status" value="1"/>
</dbReference>
<dbReference type="Pfam" id="PF02033">
    <property type="entry name" value="RBFA"/>
    <property type="match status" value="1"/>
</dbReference>
<dbReference type="SUPFAM" id="SSF89919">
    <property type="entry name" value="Ribosome-binding factor A, RbfA"/>
    <property type="match status" value="1"/>
</dbReference>
<dbReference type="PROSITE" id="PS01319">
    <property type="entry name" value="RBFA"/>
    <property type="match status" value="1"/>
</dbReference>
<sequence length="139" mass="15490">MATNRRVSRVAELIKREVSQMLLNGIKDDRVGTGMVSVTDVDVSGDLQHAKIYVSIYGTDEAKVETMAGLKSATGYVRSELGARVRLRRTPEVIFLEDRSIERGNKVLALLSQLNHDRPPENLLAVEDNTDEDDESFSE</sequence>
<protein>
    <recommendedName>
        <fullName evidence="1">Ribosome-binding factor A</fullName>
    </recommendedName>
</protein>
<gene>
    <name evidence="1" type="primary">rbfA</name>
    <name type="ordered locus">Npun_F0703</name>
</gene>
<comment type="function">
    <text evidence="1">One of several proteins that assist in the late maturation steps of the functional core of the 30S ribosomal subunit. Associates with free 30S ribosomal subunits (but not with 30S subunits that are part of 70S ribosomes or polysomes). Required for efficient processing of 16S rRNA. May interact with the 5'-terminal helix region of 16S rRNA.</text>
</comment>
<comment type="subunit">
    <text evidence="1">Monomer. Binds 30S ribosomal subunits, but not 50S ribosomal subunits or 70S ribosomes.</text>
</comment>
<comment type="subcellular location">
    <subcellularLocation>
        <location evidence="1">Cytoplasm</location>
    </subcellularLocation>
</comment>
<comment type="similarity">
    <text evidence="1">Belongs to the RbfA family.</text>
</comment>